<gene>
    <name evidence="1" type="primary">H</name>
    <name type="ordered locus">lambdap16</name>
</gene>
<proteinExistence type="evidence at protein level"/>
<name>TMP_LAMBD</name>
<accession>P03736</accession>
<protein>
    <recommendedName>
        <fullName evidence="1">Tape measure protein</fullName>
        <shortName evidence="1">TMP</shortName>
    </recommendedName>
    <alternativeName>
        <fullName evidence="1 7">Gene product H</fullName>
        <shortName evidence="1 7">gpH</shortName>
    </alternativeName>
    <alternativeName>
        <fullName evidence="1">Minor tail protein H</fullName>
    </alternativeName>
    <component>
        <recommendedName>
            <fullName evidence="1">Entry protein H*</fullName>
        </recommendedName>
    </component>
</protein>
<dbReference type="EMBL" id="J02459">
    <property type="protein sequence ID" value="AAA96548.1"/>
    <property type="molecule type" value="Genomic_DNA"/>
</dbReference>
<dbReference type="PIR" id="G43008">
    <property type="entry name" value="TLBPHL"/>
</dbReference>
<dbReference type="RefSeq" id="NP_040595.1">
    <property type="nucleotide sequence ID" value="NC_001416.1"/>
</dbReference>
<dbReference type="PDB" id="8IYK">
    <property type="method" value="EM"/>
    <property type="resolution" value="2.95 A"/>
    <property type="chains" value="H/O/g=1-853"/>
</dbReference>
<dbReference type="PDB" id="8IYL">
    <property type="method" value="EM"/>
    <property type="resolution" value="3.00 A"/>
    <property type="chains" value="H/K/e=1-853"/>
</dbReference>
<dbReference type="PDB" id="8K35">
    <property type="method" value="EM"/>
    <property type="resolution" value="3.44 A"/>
    <property type="chains" value="M/P/S=1-853"/>
</dbReference>
<dbReference type="PDBsum" id="8IYK"/>
<dbReference type="PDBsum" id="8IYL"/>
<dbReference type="PDBsum" id="8K35"/>
<dbReference type="EMDB" id="EMD-35824"/>
<dbReference type="EMDB" id="EMD-35825"/>
<dbReference type="EMDB" id="EMD-36844"/>
<dbReference type="SMR" id="P03736"/>
<dbReference type="IntAct" id="P03736">
    <property type="interactions" value="4"/>
</dbReference>
<dbReference type="GeneID" id="2703511"/>
<dbReference type="KEGG" id="vg:2703511"/>
<dbReference type="Proteomes" id="UP000001711">
    <property type="component" value="Genome"/>
</dbReference>
<dbReference type="GO" id="GO:0098015">
    <property type="term" value="C:virus tail"/>
    <property type="evidence" value="ECO:0007669"/>
    <property type="project" value="UniProtKB-UniRule"/>
</dbReference>
<dbReference type="GO" id="GO:0099001">
    <property type="term" value="P:symbiont genome ejection through host cell envelope, long flexible tail mechanism"/>
    <property type="evidence" value="ECO:0007669"/>
    <property type="project" value="UniProtKB-KW"/>
</dbReference>
<dbReference type="GO" id="GO:0098003">
    <property type="term" value="P:viral tail assembly"/>
    <property type="evidence" value="ECO:0000314"/>
    <property type="project" value="UniProtKB"/>
</dbReference>
<dbReference type="HAMAP" id="MF_04138">
    <property type="entry name" value="TMP_LAMBDA"/>
    <property type="match status" value="1"/>
</dbReference>
<dbReference type="InterPro" id="IPR043680">
    <property type="entry name" value="GpH_LAMBDA"/>
</dbReference>
<dbReference type="InterPro" id="IPR006431">
    <property type="entry name" value="Phage_tape_meas_C"/>
</dbReference>
<dbReference type="InterPro" id="IPR009628">
    <property type="entry name" value="Phage_tape_measure_N"/>
</dbReference>
<dbReference type="NCBIfam" id="TIGR01541">
    <property type="entry name" value="tape_meas_lam_C"/>
    <property type="match status" value="1"/>
</dbReference>
<dbReference type="Pfam" id="PF09718">
    <property type="entry name" value="Tape_meas_lam_C"/>
    <property type="match status" value="1"/>
</dbReference>
<dbReference type="Pfam" id="PF06791">
    <property type="entry name" value="TMP_2"/>
    <property type="match status" value="1"/>
</dbReference>
<sequence length="853" mass="92280">MAEPVGDLVVDLSLDAARFDEQMARVRRHFSGTESDAKKTAAVVEQSLSRQALAAQKAGISVGQYKAAMRMLPAQFTDVATQLAGGQSPWLILLQQGGQVKDSFGGMIPMFRGLAGAITLPMVGATSLAVATGALAYAWYQGNSTLSDFNKTLVLSGNQAGLTADRMLVLSRAGQAAGLTFNQTSESLSALVKAGVSGEAQIASISQSVARFSSASGVEVDKVAEAFGKLTTDPTSGLTAMARQFHNVSAEQIAYVAQLQRSGDEAGALQAANEAATKGFDDQTRRLKENMGTLETWADRTARAFKSMWDAVLDIGRPDTAQEMLIKAEAAYKKADDIWNLRKDDYFVNDEARARYWDDREKARLALEAARKKAEQQTQQDKNAQQQSDTEASRLKYTEEAQKAYERLQTPLEKYTARQEELNKALKDGKILQADYNTLMAAAKKDYEATLKKPKQSSVKVSAGDRQEDSAHAALLTLQAELRTLEKHAGANEKISQQRRDLWKAESQFAVLEEAAQRRQLSAQEKSLLAHKDETLEYKRQLAALGDKVTYQERLNALAQQADKFAQQQRAKRAAIDAKSRGLTDRQAEREATEQRLKEQYGDNPLALNNVMSEQKKTWAAEDQLRGNWMAGLKSGWSEWEESATDSMSQVKSAATQTFDGIAQNMAAMLTGSEQNWRSFTRSVLSMMTEILLKQAMVGIVGSIGSAIGGAVGGGASASGGTAIQAAAAKFHFATGGFTGTGGKYEPAGIVHRGEFVFTKEATSRIGVGNLYRLMRGYATGGYVGTPGSMADSRSQASGTFEQNNHVVINNDGTNGQIGPAALKAVYDMARKGARDEIQTQMRDGGLFSGGGR</sequence>
<evidence type="ECO:0000255" key="1">
    <source>
        <dbReference type="HAMAP-Rule" id="MF_04138"/>
    </source>
</evidence>
<evidence type="ECO:0000256" key="2">
    <source>
        <dbReference type="SAM" id="MobiDB-lite"/>
    </source>
</evidence>
<evidence type="ECO:0000269" key="3">
    <source>
    </source>
</evidence>
<evidence type="ECO:0000269" key="4">
    <source>
    </source>
</evidence>
<evidence type="ECO:0000269" key="5">
    <source>
    </source>
</evidence>
<evidence type="ECO:0000269" key="6">
    <source>
    </source>
</evidence>
<evidence type="ECO:0000303" key="7">
    <source>
    </source>
</evidence>
<evidence type="ECO:0000305" key="8">
    <source>
    </source>
</evidence>
<evidence type="ECO:0000305" key="9">
    <source>
    </source>
</evidence>
<evidence type="ECO:0000305" key="10">
    <source>
    </source>
</evidence>
<evidence type="ECO:0000305" key="11">
    <source>
    </source>
</evidence>
<organism>
    <name type="scientific">Escherichia phage lambda</name>
    <name type="common">Bacteriophage lambda</name>
    <dbReference type="NCBI Taxonomy" id="2681611"/>
    <lineage>
        <taxon>Viruses</taxon>
        <taxon>Duplodnaviria</taxon>
        <taxon>Heunggongvirae</taxon>
        <taxon>Uroviricota</taxon>
        <taxon>Caudoviricetes</taxon>
        <taxon>Lambdavirus</taxon>
        <taxon>Lambdavirus lambda</taxon>
    </lineage>
</organism>
<comment type="function">
    <text evidence="1 3 4 7 8 9 10 11">Serves as a ruler that controls the length of tail by stopping the tail tube polymerization and is probably released from the tail shaft during infection to facilitate DNA translocation into the host cell (PubMed:2150582). Assembles into a multimeric linear form possibly stabilized by the covering tail assembly proteins G and GT (PubMed:23911548). Its C-terminus fixes the tail tip complex (J, I, L, K), thereby forming the tail assembly initiator complex (PubMed:23911548). Tail tube proteins polymerize around tape measure protein, displacing the tail assembly protein G and GT (PubMed:23911548). When the tail reaches the length specified by the tape measure protein, it stops and becomes capped by the tail terminator protein (Probable). Upon tail assembly, tape measure protein is cleaved into a form called H*, that plays a role later during virion entry in a new cell (Probable). Once assembled, the virion is released and can infect new cells by binding to the entry receptor LambB (Probable). After opening of a pore on the external membrane, the entry protein H* protein is probably released in the periplasmic space for successful DNA injection (PubMed:23911548).</text>
</comment>
<comment type="subunit">
    <text evidence="1 4 9">Interacts with the tail initiator complex presumably through its C-terminus domain (Probable). Interacts with the tail assembly protein G (PubMed:23911548). Interacts with the tail assembly protein GT (PubMed:23911548).</text>
</comment>
<comment type="subcellular location">
    <subcellularLocation>
        <location evidence="1 5">Virion</location>
    </subcellularLocation>
    <text evidence="1 5">There are 6 copies of entry protein H* per mature phage.</text>
</comment>
<comment type="PTM">
    <text evidence="1 6">Cleaved into mature protein H* by an unidentified protease.</text>
</comment>
<comment type="similarity">
    <text evidence="1">Belongs to the Lambdavirus tape measure protein family.</text>
</comment>
<keyword id="KW-0002">3D-structure</keyword>
<keyword id="KW-0175">Coiled coil</keyword>
<keyword id="KW-1185">Reference proteome</keyword>
<keyword id="KW-1171">Viral genome ejection through host cell envelope</keyword>
<keyword id="KW-1243">Viral long flexible tail ejection system</keyword>
<keyword id="KW-1162">Viral penetration into host cytoplasm</keyword>
<keyword id="KW-1188">Viral release from host cell</keyword>
<keyword id="KW-1245">Viral tail assembly</keyword>
<keyword id="KW-1227">Viral tail protein</keyword>
<keyword id="KW-0946">Virion</keyword>
<keyword id="KW-1160">Virus entry into host cell</keyword>
<reference key="1">
    <citation type="journal article" date="1982" name="J. Mol. Biol.">
        <title>Nucleotide sequence of bacteriophage lambda DNA.</title>
        <authorList>
            <person name="Sanger F."/>
            <person name="Coulson A.R."/>
            <person name="Hong G.F."/>
            <person name="Hill D.F."/>
            <person name="Petersen G.B."/>
        </authorList>
    </citation>
    <scope>NUCLEOTIDE SEQUENCE [LARGE SCALE GENOMIC DNA]</scope>
</reference>
<reference key="2">
    <citation type="journal article" date="1976" name="Virology">
        <title>Phage lambda DNA injection into Escherichia coli pel- mutants is restored by mutations in phage genes V or H.</title>
        <authorList>
            <person name="Scandella D."/>
            <person name="Arber W."/>
        </authorList>
    </citation>
    <scope>FUNCTION</scope>
</reference>
<reference key="3">
    <citation type="journal article" date="1983" name="Virology">
        <title>Proteolytic processing of phage lambda tail protein gpH: timing of the cleavage.</title>
        <authorList>
            <person name="Tsui L.C."/>
            <person name="Hendrix R.W."/>
        </authorList>
    </citation>
    <scope>POST-TRANSLATIONAL MODIFICATION</scope>
    <scope>FUNCTION</scope>
</reference>
<reference key="4">
    <citation type="journal article" date="1974" name="J. Mol. Biol.">
        <title>Locations and amounts of major structural proteins in bacteriophage lambda.</title>
        <authorList>
            <person name="Casjens S.R."/>
            <person name="Hendrix R.W."/>
        </authorList>
    </citation>
    <scope>SUBCELLULAR LOCATION</scope>
</reference>
<reference key="5">
    <citation type="journal article" date="1984" name="J. Bacteriol.">
        <title>Proteinase sensitivity of bacteriophage lambda tail proteins gpJ and pH in complexes with the lambda receptor.</title>
        <authorList>
            <person name="Roessner C.A."/>
            <person name="Ihler G.M."/>
        </authorList>
    </citation>
    <scope>FUNCTION</scope>
</reference>
<reference key="6">
    <citation type="journal article" date="1990" name="Adv. Biophys.">
        <title>Mechanism of length determination in bacteriophage lambda tails.</title>
        <authorList>
            <person name="Katsura I."/>
        </authorList>
    </citation>
    <scope>FUNCTION</scope>
</reference>
<reference key="7">
    <citation type="journal article" date="2014" name="J. Mol. Biol.">
        <title>Chaperone-protein interactions that mediate assembly of the bacteriophage lambda tail to the correct length.</title>
        <authorList>
            <person name="Xu J."/>
            <person name="Hendrix R.W."/>
            <person name="Duda R.L."/>
        </authorList>
    </citation>
    <scope>INTERACTION WITH TAIL ASSEMBLY PROTEIN G</scope>
    <scope>INTERACTION WITH TAIL ASSEMBLY PROTEIN GT</scope>
    <scope>FUNCTION</scope>
</reference>
<organismHost>
    <name type="scientific">Escherichia coli</name>
    <dbReference type="NCBI Taxonomy" id="562"/>
</organismHost>
<feature type="chain" id="PRO_0000077666" description="Tape measure protein" evidence="1">
    <location>
        <begin position="1"/>
        <end position="853"/>
    </location>
</feature>
<feature type="chain" id="PRO_0000223267" description="Entry protein H*" evidence="1">
    <location>
        <begin status="unknown"/>
        <end position="853"/>
    </location>
</feature>
<feature type="region of interest" description="Disordered" evidence="2">
    <location>
        <begin position="370"/>
        <end position="393"/>
    </location>
</feature>
<feature type="coiled-coil region" evidence="1">
    <location>
        <begin position="360"/>
        <end position="387"/>
    </location>
</feature>
<feature type="coiled-coil region" evidence="1">
    <location>
        <begin position="548"/>
        <end position="568"/>
    </location>
</feature>
<feature type="compositionally biased region" description="Low complexity" evidence="2">
    <location>
        <begin position="376"/>
        <end position="387"/>
    </location>
</feature>